<proteinExistence type="inferred from homology"/>
<gene>
    <name evidence="1" type="primary">rsmA</name>
    <name evidence="1" type="synonym">ksgA</name>
    <name type="ordered locus">UUR10_0706</name>
</gene>
<feature type="chain" id="PRO_1000130333" description="Ribosomal RNA small subunit methyltransferase A">
    <location>
        <begin position="1"/>
        <end position="281"/>
    </location>
</feature>
<feature type="binding site" evidence="1">
    <location>
        <position position="24"/>
    </location>
    <ligand>
        <name>S-adenosyl-L-methionine</name>
        <dbReference type="ChEBI" id="CHEBI:59789"/>
    </ligand>
</feature>
<feature type="binding site" evidence="1">
    <location>
        <position position="26"/>
    </location>
    <ligand>
        <name>S-adenosyl-L-methionine</name>
        <dbReference type="ChEBI" id="CHEBI:59789"/>
    </ligand>
</feature>
<feature type="binding site" evidence="1">
    <location>
        <position position="51"/>
    </location>
    <ligand>
        <name>S-adenosyl-L-methionine</name>
        <dbReference type="ChEBI" id="CHEBI:59789"/>
    </ligand>
</feature>
<feature type="binding site" evidence="1">
    <location>
        <position position="72"/>
    </location>
    <ligand>
        <name>S-adenosyl-L-methionine</name>
        <dbReference type="ChEBI" id="CHEBI:59789"/>
    </ligand>
</feature>
<feature type="binding site" evidence="1">
    <location>
        <position position="96"/>
    </location>
    <ligand>
        <name>S-adenosyl-L-methionine</name>
        <dbReference type="ChEBI" id="CHEBI:59789"/>
    </ligand>
</feature>
<feature type="binding site" evidence="1">
    <location>
        <position position="123"/>
    </location>
    <ligand>
        <name>S-adenosyl-L-methionine</name>
        <dbReference type="ChEBI" id="CHEBI:59789"/>
    </ligand>
</feature>
<dbReference type="EC" id="2.1.1.182" evidence="1"/>
<dbReference type="EMBL" id="CP001184">
    <property type="protein sequence ID" value="ACI60331.1"/>
    <property type="molecule type" value="Genomic_DNA"/>
</dbReference>
<dbReference type="RefSeq" id="WP_004025835.1">
    <property type="nucleotide sequence ID" value="NC_011374.1"/>
</dbReference>
<dbReference type="SMR" id="B5ZCB6"/>
<dbReference type="STRING" id="565575.UUR10_0706"/>
<dbReference type="GeneID" id="93849157"/>
<dbReference type="KEGG" id="uue:UUR10_0706"/>
<dbReference type="eggNOG" id="COG0030">
    <property type="taxonomic scope" value="Bacteria"/>
</dbReference>
<dbReference type="HOGENOM" id="CLU_041220_0_1_14"/>
<dbReference type="OrthoDB" id="9814755at2"/>
<dbReference type="Proteomes" id="UP000002018">
    <property type="component" value="Chromosome"/>
</dbReference>
<dbReference type="GO" id="GO:0005829">
    <property type="term" value="C:cytosol"/>
    <property type="evidence" value="ECO:0007669"/>
    <property type="project" value="TreeGrafter"/>
</dbReference>
<dbReference type="GO" id="GO:0052908">
    <property type="term" value="F:16S rRNA (adenine(1518)-N(6)/adenine(1519)-N(6))-dimethyltransferase activity"/>
    <property type="evidence" value="ECO:0007669"/>
    <property type="project" value="UniProtKB-EC"/>
</dbReference>
<dbReference type="GO" id="GO:0003723">
    <property type="term" value="F:RNA binding"/>
    <property type="evidence" value="ECO:0007669"/>
    <property type="project" value="UniProtKB-KW"/>
</dbReference>
<dbReference type="Gene3D" id="1.10.8.100">
    <property type="entry name" value="Ribosomal RNA adenine dimethylase-like, domain 2"/>
    <property type="match status" value="1"/>
</dbReference>
<dbReference type="Gene3D" id="3.40.50.150">
    <property type="entry name" value="Vaccinia Virus protein VP39"/>
    <property type="match status" value="1"/>
</dbReference>
<dbReference type="HAMAP" id="MF_00607">
    <property type="entry name" value="16SrRNA_methyltr_A"/>
    <property type="match status" value="1"/>
</dbReference>
<dbReference type="InterPro" id="IPR001737">
    <property type="entry name" value="KsgA/Erm"/>
</dbReference>
<dbReference type="InterPro" id="IPR023165">
    <property type="entry name" value="rRNA_Ade_diMease-like_C"/>
</dbReference>
<dbReference type="InterPro" id="IPR020596">
    <property type="entry name" value="rRNA_Ade_Mease_Trfase_CS"/>
</dbReference>
<dbReference type="InterPro" id="IPR020598">
    <property type="entry name" value="rRNA_Ade_methylase_Trfase_N"/>
</dbReference>
<dbReference type="InterPro" id="IPR011530">
    <property type="entry name" value="rRNA_adenine_dimethylase"/>
</dbReference>
<dbReference type="InterPro" id="IPR029063">
    <property type="entry name" value="SAM-dependent_MTases_sf"/>
</dbReference>
<dbReference type="NCBIfam" id="TIGR00755">
    <property type="entry name" value="ksgA"/>
    <property type="match status" value="1"/>
</dbReference>
<dbReference type="PANTHER" id="PTHR11727">
    <property type="entry name" value="DIMETHYLADENOSINE TRANSFERASE"/>
    <property type="match status" value="1"/>
</dbReference>
<dbReference type="PANTHER" id="PTHR11727:SF7">
    <property type="entry name" value="DIMETHYLADENOSINE TRANSFERASE-RELATED"/>
    <property type="match status" value="1"/>
</dbReference>
<dbReference type="Pfam" id="PF00398">
    <property type="entry name" value="RrnaAD"/>
    <property type="match status" value="1"/>
</dbReference>
<dbReference type="SMART" id="SM00650">
    <property type="entry name" value="rADc"/>
    <property type="match status" value="1"/>
</dbReference>
<dbReference type="SUPFAM" id="SSF53335">
    <property type="entry name" value="S-adenosyl-L-methionine-dependent methyltransferases"/>
    <property type="match status" value="1"/>
</dbReference>
<dbReference type="PROSITE" id="PS01131">
    <property type="entry name" value="RRNA_A_DIMETH"/>
    <property type="match status" value="1"/>
</dbReference>
<dbReference type="PROSITE" id="PS51689">
    <property type="entry name" value="SAM_RNA_A_N6_MT"/>
    <property type="match status" value="1"/>
</dbReference>
<reference key="1">
    <citation type="submission" date="2008-10" db="EMBL/GenBank/DDBJ databases">
        <title>Genome sequence of Ureaplasma urealyticum serovar 10 ATCC-33699.</title>
        <authorList>
            <person name="Shrivastava S."/>
            <person name="Methe B.A."/>
            <person name="Glass J."/>
            <person name="White K."/>
            <person name="Duffy L.B."/>
        </authorList>
    </citation>
    <scope>NUCLEOTIDE SEQUENCE [LARGE SCALE GENOMIC DNA]</scope>
    <source>
        <strain>ATCC 33699 / Western</strain>
    </source>
</reference>
<protein>
    <recommendedName>
        <fullName evidence="1">Ribosomal RNA small subunit methyltransferase A</fullName>
        <ecNumber evidence="1">2.1.1.182</ecNumber>
    </recommendedName>
    <alternativeName>
        <fullName evidence="1">16S rRNA (adenine(1518)-N(6)/adenine(1519)-N(6))-dimethyltransferase</fullName>
    </alternativeName>
    <alternativeName>
        <fullName evidence="1">16S rRNA dimethyladenosine transferase</fullName>
    </alternativeName>
    <alternativeName>
        <fullName evidence="1">16S rRNA dimethylase</fullName>
    </alternativeName>
    <alternativeName>
        <fullName evidence="1">S-adenosylmethionine-6-N', N'-adenosyl(rRNA) dimethyltransferase</fullName>
    </alternativeName>
</protein>
<sequence length="281" mass="32516">MNKTVIKNKLKQESFVPSKKMGQNFLLSNEIKNKIVNVANISKDDLILEIGPGWGAITELLVQKTDTLVAIELDKRLYAHLKTYIKAPNFHIINNDVLCVDLDKLILDYTNTKKNQKIKVVANLPYAISSKIVLKIIQSKLINDAYIMVQKEMAERIGAKVNTRGYNAFTVLVQLFCKTKILFQVNAKEFHPQPKVQSAVIHLENLHNKVDFDIEQVSKFLRICFLNKRKKLKNNLSNIYDIKLVNEMFIDYNLDMNLRAENIEPKMFLELFNYLNKSNNE</sequence>
<name>RSMA_UREU1</name>
<organism>
    <name type="scientific">Ureaplasma urealyticum serovar 10 (strain ATCC 33699 / Western)</name>
    <dbReference type="NCBI Taxonomy" id="565575"/>
    <lineage>
        <taxon>Bacteria</taxon>
        <taxon>Bacillati</taxon>
        <taxon>Mycoplasmatota</taxon>
        <taxon>Mycoplasmoidales</taxon>
        <taxon>Mycoplasmoidaceae</taxon>
        <taxon>Ureaplasma</taxon>
    </lineage>
</organism>
<accession>B5ZCB6</accession>
<evidence type="ECO:0000255" key="1">
    <source>
        <dbReference type="HAMAP-Rule" id="MF_00607"/>
    </source>
</evidence>
<comment type="function">
    <text evidence="1">Specifically dimethylates two adjacent adenosines (A1518 and A1519) in the loop of a conserved hairpin near the 3'-end of 16S rRNA in the 30S particle. May play a critical role in biogenesis of 30S subunits.</text>
</comment>
<comment type="catalytic activity">
    <reaction evidence="1">
        <text>adenosine(1518)/adenosine(1519) in 16S rRNA + 4 S-adenosyl-L-methionine = N(6)-dimethyladenosine(1518)/N(6)-dimethyladenosine(1519) in 16S rRNA + 4 S-adenosyl-L-homocysteine + 4 H(+)</text>
        <dbReference type="Rhea" id="RHEA:19609"/>
        <dbReference type="Rhea" id="RHEA-COMP:10232"/>
        <dbReference type="Rhea" id="RHEA-COMP:10233"/>
        <dbReference type="ChEBI" id="CHEBI:15378"/>
        <dbReference type="ChEBI" id="CHEBI:57856"/>
        <dbReference type="ChEBI" id="CHEBI:59789"/>
        <dbReference type="ChEBI" id="CHEBI:74411"/>
        <dbReference type="ChEBI" id="CHEBI:74493"/>
        <dbReference type="EC" id="2.1.1.182"/>
    </reaction>
</comment>
<comment type="subcellular location">
    <subcellularLocation>
        <location evidence="1">Cytoplasm</location>
    </subcellularLocation>
</comment>
<comment type="similarity">
    <text evidence="1">Belongs to the class I-like SAM-binding methyltransferase superfamily. rRNA adenine N(6)-methyltransferase family. RsmA subfamily.</text>
</comment>
<keyword id="KW-0963">Cytoplasm</keyword>
<keyword id="KW-0489">Methyltransferase</keyword>
<keyword id="KW-0694">RNA-binding</keyword>
<keyword id="KW-0698">rRNA processing</keyword>
<keyword id="KW-0949">S-adenosyl-L-methionine</keyword>
<keyword id="KW-0808">Transferase</keyword>